<reference key="1">
    <citation type="journal article" date="2002" name="J. Bacteriol.">
        <title>Whole-genome comparison of Mycobacterium tuberculosis clinical and laboratory strains.</title>
        <authorList>
            <person name="Fleischmann R.D."/>
            <person name="Alland D."/>
            <person name="Eisen J.A."/>
            <person name="Carpenter L."/>
            <person name="White O."/>
            <person name="Peterson J.D."/>
            <person name="DeBoy R.T."/>
            <person name="Dodson R.J."/>
            <person name="Gwinn M.L."/>
            <person name="Haft D.H."/>
            <person name="Hickey E.K."/>
            <person name="Kolonay J.F."/>
            <person name="Nelson W.C."/>
            <person name="Umayam L.A."/>
            <person name="Ermolaeva M.D."/>
            <person name="Salzberg S.L."/>
            <person name="Delcher A."/>
            <person name="Utterback T.R."/>
            <person name="Weidman J.F."/>
            <person name="Khouri H.M."/>
            <person name="Gill J."/>
            <person name="Mikula A."/>
            <person name="Bishai W."/>
            <person name="Jacobs W.R. Jr."/>
            <person name="Venter J.C."/>
            <person name="Fraser C.M."/>
        </authorList>
    </citation>
    <scope>NUCLEOTIDE SEQUENCE [LARGE SCALE GENOMIC DNA]</scope>
    <source>
        <strain>CDC 1551 / Oshkosh</strain>
    </source>
</reference>
<proteinExistence type="inferred from homology"/>
<comment type="function">
    <text evidence="1">Peptide chain release factor 2 directs the termination of translation in response to the peptide chain termination codons UGA and UAA.</text>
</comment>
<comment type="subcellular location">
    <subcellularLocation>
        <location evidence="1">Cytoplasm</location>
    </subcellularLocation>
</comment>
<comment type="PTM">
    <text evidence="1">Methylated by PrmC. Methylation increases the termination efficiency of RF2 (By similarity).</text>
</comment>
<comment type="similarity">
    <text evidence="2">Belongs to the prokaryotic/mitochondrial release factor family.</text>
</comment>
<gene>
    <name type="primary">prfB</name>
    <name type="ordered locus">MT3188</name>
</gene>
<protein>
    <recommendedName>
        <fullName>Peptide chain release factor 2</fullName>
        <shortName>RF-2</shortName>
    </recommendedName>
</protein>
<sequence length="371" mass="41473">MDPDRQADIAALDCTLTTVERVLDVEGLRSRIEKLEHEASDPHLWDDQTRAQRVTSELSHTQGELRRVEELRRRLDDLPVLYELAAEEAGAAAADAVAEADAELKSLRADIEATEVRTLLSGEYDEREALVTIRSGAGGVDAADWAEMLMRMYIRWAEQHKYPVEVFDTSYAEEAGIKSATFAVHAPFAYGTLSVEQGTHRLVRISPFDNQSRRQTSFAEVEVLPVVETTDHIDIPEGDVRVDVYRSSGPGGQSVNTTDSAVRLTHIPSGIVVTCQNEKSQLQNKIAAMRVLQAKLLERKRLEERAELDALKADGGSSWGNQMRSYVLHPYQMVKDLRTEYEVGNPAAVLDGDLDGFLEAGIRWRNRRNDD</sequence>
<organism>
    <name type="scientific">Mycobacterium tuberculosis (strain CDC 1551 / Oshkosh)</name>
    <dbReference type="NCBI Taxonomy" id="83331"/>
    <lineage>
        <taxon>Bacteria</taxon>
        <taxon>Bacillati</taxon>
        <taxon>Actinomycetota</taxon>
        <taxon>Actinomycetes</taxon>
        <taxon>Mycobacteriales</taxon>
        <taxon>Mycobacteriaceae</taxon>
        <taxon>Mycobacterium</taxon>
        <taxon>Mycobacterium tuberculosis complex</taxon>
    </lineage>
</organism>
<feature type="chain" id="PRO_0000428193" description="Peptide chain release factor 2">
    <location>
        <begin position="1"/>
        <end position="371"/>
    </location>
</feature>
<feature type="modified residue" description="N5-methylglutamine" evidence="1">
    <location>
        <position position="253"/>
    </location>
</feature>
<evidence type="ECO:0000250" key="1"/>
<evidence type="ECO:0000305" key="2"/>
<dbReference type="EMBL" id="AE000516">
    <property type="protein sequence ID" value="AAK47527.1"/>
    <property type="molecule type" value="Genomic_DNA"/>
</dbReference>
<dbReference type="PIR" id="H70919">
    <property type="entry name" value="H70919"/>
</dbReference>
<dbReference type="RefSeq" id="WP_003416129.1">
    <property type="nucleotide sequence ID" value="NZ_KK341227.1"/>
</dbReference>
<dbReference type="RefSeq" id="WP_010924615.1">
    <property type="nucleotide sequence ID" value="NC_002755.2"/>
</dbReference>
<dbReference type="SMR" id="P9WHG0"/>
<dbReference type="GeneID" id="45427104"/>
<dbReference type="KEGG" id="mtc:MT3188"/>
<dbReference type="HOGENOM" id="CLU_036856_6_0_11"/>
<dbReference type="Proteomes" id="UP000001020">
    <property type="component" value="Chromosome"/>
</dbReference>
<dbReference type="GO" id="GO:0005737">
    <property type="term" value="C:cytoplasm"/>
    <property type="evidence" value="ECO:0007669"/>
    <property type="project" value="UniProtKB-SubCell"/>
</dbReference>
<dbReference type="GO" id="GO:0016149">
    <property type="term" value="F:translation release factor activity, codon specific"/>
    <property type="evidence" value="ECO:0007669"/>
    <property type="project" value="UniProtKB-UniRule"/>
</dbReference>
<dbReference type="FunFam" id="1.20.58.410:FF:000002">
    <property type="entry name" value="Peptide chain release factor 2"/>
    <property type="match status" value="1"/>
</dbReference>
<dbReference type="FunFam" id="3.30.160.20:FF:000010">
    <property type="entry name" value="Peptide chain release factor 2"/>
    <property type="match status" value="1"/>
</dbReference>
<dbReference type="Gene3D" id="3.30.160.20">
    <property type="match status" value="1"/>
</dbReference>
<dbReference type="Gene3D" id="3.30.70.1660">
    <property type="match status" value="1"/>
</dbReference>
<dbReference type="Gene3D" id="1.20.58.410">
    <property type="entry name" value="Release factor"/>
    <property type="match status" value="1"/>
</dbReference>
<dbReference type="HAMAP" id="MF_00094">
    <property type="entry name" value="Rel_fac_2"/>
    <property type="match status" value="1"/>
</dbReference>
<dbReference type="InterPro" id="IPR005139">
    <property type="entry name" value="PCRF"/>
</dbReference>
<dbReference type="InterPro" id="IPR000352">
    <property type="entry name" value="Pep_chain_release_fac_I"/>
</dbReference>
<dbReference type="InterPro" id="IPR045853">
    <property type="entry name" value="Pep_chain_release_fac_I_sf"/>
</dbReference>
<dbReference type="InterPro" id="IPR004374">
    <property type="entry name" value="PrfB"/>
</dbReference>
<dbReference type="NCBIfam" id="TIGR00020">
    <property type="entry name" value="prfB"/>
    <property type="match status" value="1"/>
</dbReference>
<dbReference type="PANTHER" id="PTHR43116:SF3">
    <property type="entry name" value="CLASS I PEPTIDE CHAIN RELEASE FACTOR"/>
    <property type="match status" value="1"/>
</dbReference>
<dbReference type="PANTHER" id="PTHR43116">
    <property type="entry name" value="PEPTIDE CHAIN RELEASE FACTOR 2"/>
    <property type="match status" value="1"/>
</dbReference>
<dbReference type="Pfam" id="PF03462">
    <property type="entry name" value="PCRF"/>
    <property type="match status" value="1"/>
</dbReference>
<dbReference type="Pfam" id="PF00472">
    <property type="entry name" value="RF-1"/>
    <property type="match status" value="1"/>
</dbReference>
<dbReference type="SMART" id="SM00937">
    <property type="entry name" value="PCRF"/>
    <property type="match status" value="1"/>
</dbReference>
<dbReference type="SUPFAM" id="SSF75620">
    <property type="entry name" value="Release factor"/>
    <property type="match status" value="1"/>
</dbReference>
<dbReference type="PROSITE" id="PS00745">
    <property type="entry name" value="RF_PROK_I"/>
    <property type="match status" value="1"/>
</dbReference>
<keyword id="KW-0963">Cytoplasm</keyword>
<keyword id="KW-0488">Methylation</keyword>
<keyword id="KW-0648">Protein biosynthesis</keyword>
<keyword id="KW-1185">Reference proteome</keyword>
<name>RF2_MYCTO</name>
<accession>P9WHG0</accession>
<accession>L0TD65</accession>
<accession>O05782</accession>
<accession>P66026</accession>